<evidence type="ECO:0000250" key="1"/>
<evidence type="ECO:0000255" key="2">
    <source>
        <dbReference type="HAMAP-Rule" id="MF_01057"/>
    </source>
</evidence>
<reference key="1">
    <citation type="journal article" date="2002" name="Nature">
        <title>Comparison of the genomes of two Xanthomonas pathogens with differing host specificities.</title>
        <authorList>
            <person name="da Silva A.C.R."/>
            <person name="Ferro J.A."/>
            <person name="Reinach F.C."/>
            <person name="Farah C.S."/>
            <person name="Furlan L.R."/>
            <person name="Quaggio R.B."/>
            <person name="Monteiro-Vitorello C.B."/>
            <person name="Van Sluys M.A."/>
            <person name="Almeida N.F. Jr."/>
            <person name="Alves L.M.C."/>
            <person name="do Amaral A.M."/>
            <person name="Bertolini M.C."/>
            <person name="Camargo L.E.A."/>
            <person name="Camarotte G."/>
            <person name="Cannavan F."/>
            <person name="Cardozo J."/>
            <person name="Chambergo F."/>
            <person name="Ciapina L.P."/>
            <person name="Cicarelli R.M.B."/>
            <person name="Coutinho L.L."/>
            <person name="Cursino-Santos J.R."/>
            <person name="El-Dorry H."/>
            <person name="Faria J.B."/>
            <person name="Ferreira A.J.S."/>
            <person name="Ferreira R.C.C."/>
            <person name="Ferro M.I.T."/>
            <person name="Formighieri E.F."/>
            <person name="Franco M.C."/>
            <person name="Greggio C.C."/>
            <person name="Gruber A."/>
            <person name="Katsuyama A.M."/>
            <person name="Kishi L.T."/>
            <person name="Leite R.P."/>
            <person name="Lemos E.G.M."/>
            <person name="Lemos M.V.F."/>
            <person name="Locali E.C."/>
            <person name="Machado M.A."/>
            <person name="Madeira A.M.B.N."/>
            <person name="Martinez-Rossi N.M."/>
            <person name="Martins E.C."/>
            <person name="Meidanis J."/>
            <person name="Menck C.F.M."/>
            <person name="Miyaki C.Y."/>
            <person name="Moon D.H."/>
            <person name="Moreira L.M."/>
            <person name="Novo M.T.M."/>
            <person name="Okura V.K."/>
            <person name="Oliveira M.C."/>
            <person name="Oliveira V.R."/>
            <person name="Pereira H.A."/>
            <person name="Rossi A."/>
            <person name="Sena J.A.D."/>
            <person name="Silva C."/>
            <person name="de Souza R.F."/>
            <person name="Spinola L.A.F."/>
            <person name="Takita M.A."/>
            <person name="Tamura R.E."/>
            <person name="Teixeira E.C."/>
            <person name="Tezza R.I.D."/>
            <person name="Trindade dos Santos M."/>
            <person name="Truffi D."/>
            <person name="Tsai S.M."/>
            <person name="White F.F."/>
            <person name="Setubal J.C."/>
            <person name="Kitajima J.P."/>
        </authorList>
    </citation>
    <scope>NUCLEOTIDE SEQUENCE [LARGE SCALE GENOMIC DNA]</scope>
    <source>
        <strain>306</strain>
    </source>
</reference>
<comment type="function">
    <text evidence="2">Catalyzes the formation of N(7)-methylguanine at position 46 (m7G46) in tRNA.</text>
</comment>
<comment type="catalytic activity">
    <reaction evidence="2">
        <text>guanosine(46) in tRNA + S-adenosyl-L-methionine = N(7)-methylguanosine(46) in tRNA + S-adenosyl-L-homocysteine</text>
        <dbReference type="Rhea" id="RHEA:42708"/>
        <dbReference type="Rhea" id="RHEA-COMP:10188"/>
        <dbReference type="Rhea" id="RHEA-COMP:10189"/>
        <dbReference type="ChEBI" id="CHEBI:57856"/>
        <dbReference type="ChEBI" id="CHEBI:59789"/>
        <dbReference type="ChEBI" id="CHEBI:74269"/>
        <dbReference type="ChEBI" id="CHEBI:74480"/>
        <dbReference type="EC" id="2.1.1.33"/>
    </reaction>
</comment>
<comment type="pathway">
    <text evidence="2">tRNA modification; N(7)-methylguanine-tRNA biosynthesis.</text>
</comment>
<comment type="similarity">
    <text evidence="2">Belongs to the class I-like SAM-binding methyltransferase superfamily. TrmB family.</text>
</comment>
<accession>Q8PHF4</accession>
<name>TRMB_XANAC</name>
<protein>
    <recommendedName>
        <fullName evidence="2">tRNA (guanine-N(7)-)-methyltransferase</fullName>
        <ecNumber evidence="2">2.1.1.33</ecNumber>
    </recommendedName>
    <alternativeName>
        <fullName evidence="2">tRNA (guanine(46)-N(7))-methyltransferase</fullName>
    </alternativeName>
    <alternativeName>
        <fullName evidence="2">tRNA(m7G46)-methyltransferase</fullName>
    </alternativeName>
</protein>
<keyword id="KW-0489">Methyltransferase</keyword>
<keyword id="KW-0949">S-adenosyl-L-methionine</keyword>
<keyword id="KW-0808">Transferase</keyword>
<keyword id="KW-0819">tRNA processing</keyword>
<feature type="chain" id="PRO_0000171424" description="tRNA (guanine-N(7)-)-methyltransferase">
    <location>
        <begin position="1"/>
        <end position="261"/>
    </location>
</feature>
<feature type="region of interest" description="Interaction with RNA" evidence="2">
    <location>
        <begin position="156"/>
        <end position="161"/>
    </location>
</feature>
<feature type="active site" evidence="1">
    <location>
        <position position="150"/>
    </location>
</feature>
<feature type="binding site" evidence="2">
    <location>
        <position position="75"/>
    </location>
    <ligand>
        <name>S-adenosyl-L-methionine</name>
        <dbReference type="ChEBI" id="CHEBI:59789"/>
    </ligand>
</feature>
<feature type="binding site" evidence="2">
    <location>
        <position position="100"/>
    </location>
    <ligand>
        <name>S-adenosyl-L-methionine</name>
        <dbReference type="ChEBI" id="CHEBI:59789"/>
    </ligand>
</feature>
<feature type="binding site" evidence="2">
    <location>
        <position position="127"/>
    </location>
    <ligand>
        <name>S-adenosyl-L-methionine</name>
        <dbReference type="ChEBI" id="CHEBI:59789"/>
    </ligand>
</feature>
<feature type="binding site" evidence="2">
    <location>
        <position position="150"/>
    </location>
    <ligand>
        <name>S-adenosyl-L-methionine</name>
        <dbReference type="ChEBI" id="CHEBI:59789"/>
    </ligand>
</feature>
<feature type="binding site" evidence="2">
    <location>
        <position position="154"/>
    </location>
    <ligand>
        <name>substrate</name>
    </ligand>
</feature>
<feature type="binding site" evidence="2">
    <location>
        <position position="186"/>
    </location>
    <ligand>
        <name>substrate</name>
    </ligand>
</feature>
<feature type="binding site" evidence="2">
    <location>
        <begin position="223"/>
        <end position="226"/>
    </location>
    <ligand>
        <name>substrate</name>
    </ligand>
</feature>
<gene>
    <name evidence="2" type="primary">trmB</name>
    <name type="ordered locus">XAC3303</name>
</gene>
<organism>
    <name type="scientific">Xanthomonas axonopodis pv. citri (strain 306)</name>
    <dbReference type="NCBI Taxonomy" id="190486"/>
    <lineage>
        <taxon>Bacteria</taxon>
        <taxon>Pseudomonadati</taxon>
        <taxon>Pseudomonadota</taxon>
        <taxon>Gammaproteobacteria</taxon>
        <taxon>Lysobacterales</taxon>
        <taxon>Lysobacteraceae</taxon>
        <taxon>Xanthomonas</taxon>
    </lineage>
</organism>
<proteinExistence type="inferred from homology"/>
<sequence>MTDPFTSDGAKMPPKPFTIEEGRRQVRSFVLRQGRFTPAQQRTFDALWPRFGLDYLGAPRDLAATFGRDAHKVLEIGFGNGAALRFAAQQDPSRDYIGIEVHAPGVGRLLNALEEDGSTHVRLYHHDAVEVLEHEIADGALDEVRIYFPDPWHKKRHNKRRLIQPAFAQLLVRKLREGGRLHAATDWADYAEQMWDVLDATPGLVNRAGPRGHVERPTWRPQTHFETRGQKLGHGVWDLLYDRDSGIGNRESQEQLPSASG</sequence>
<dbReference type="EC" id="2.1.1.33" evidence="2"/>
<dbReference type="EMBL" id="AE008923">
    <property type="protein sequence ID" value="AAM38146.1"/>
    <property type="molecule type" value="Genomic_DNA"/>
</dbReference>
<dbReference type="RefSeq" id="WP_011052179.1">
    <property type="nucleotide sequence ID" value="NC_003919.1"/>
</dbReference>
<dbReference type="SMR" id="Q8PHF4"/>
<dbReference type="GeneID" id="66912356"/>
<dbReference type="KEGG" id="xac:XAC3303"/>
<dbReference type="eggNOG" id="COG0220">
    <property type="taxonomic scope" value="Bacteria"/>
</dbReference>
<dbReference type="HOGENOM" id="CLU_050910_0_1_6"/>
<dbReference type="UniPathway" id="UPA00989"/>
<dbReference type="Proteomes" id="UP000000576">
    <property type="component" value="Chromosome"/>
</dbReference>
<dbReference type="GO" id="GO:0043527">
    <property type="term" value="C:tRNA methyltransferase complex"/>
    <property type="evidence" value="ECO:0007669"/>
    <property type="project" value="TreeGrafter"/>
</dbReference>
<dbReference type="GO" id="GO:0008176">
    <property type="term" value="F:tRNA (guanine(46)-N7)-methyltransferase activity"/>
    <property type="evidence" value="ECO:0007669"/>
    <property type="project" value="UniProtKB-UniRule"/>
</dbReference>
<dbReference type="CDD" id="cd02440">
    <property type="entry name" value="AdoMet_MTases"/>
    <property type="match status" value="1"/>
</dbReference>
<dbReference type="FunFam" id="3.40.50.150:FF:000035">
    <property type="entry name" value="tRNA (guanine-N(7)-)-methyltransferase"/>
    <property type="match status" value="1"/>
</dbReference>
<dbReference type="Gene3D" id="3.40.50.150">
    <property type="entry name" value="Vaccinia Virus protein VP39"/>
    <property type="match status" value="1"/>
</dbReference>
<dbReference type="HAMAP" id="MF_01057">
    <property type="entry name" value="tRNA_methyltr_TrmB"/>
    <property type="match status" value="1"/>
</dbReference>
<dbReference type="InterPro" id="IPR029063">
    <property type="entry name" value="SAM-dependent_MTases_sf"/>
</dbReference>
<dbReference type="InterPro" id="IPR003358">
    <property type="entry name" value="tRNA_(Gua-N-7)_MeTrfase_Trmb"/>
</dbReference>
<dbReference type="InterPro" id="IPR055361">
    <property type="entry name" value="tRNA_methyltr_TrmB_bact"/>
</dbReference>
<dbReference type="NCBIfam" id="TIGR00091">
    <property type="entry name" value="tRNA (guanosine(46)-N7)-methyltransferase TrmB"/>
    <property type="match status" value="1"/>
</dbReference>
<dbReference type="PANTHER" id="PTHR23417">
    <property type="entry name" value="3-DEOXY-D-MANNO-OCTULOSONIC-ACID TRANSFERASE/TRNA GUANINE-N 7 - -METHYLTRANSFERASE"/>
    <property type="match status" value="1"/>
</dbReference>
<dbReference type="PANTHER" id="PTHR23417:SF14">
    <property type="entry name" value="PENTACOTRIPEPTIDE-REPEAT REGION OF PRORP DOMAIN-CONTAINING PROTEIN"/>
    <property type="match status" value="1"/>
</dbReference>
<dbReference type="Pfam" id="PF02390">
    <property type="entry name" value="Methyltransf_4"/>
    <property type="match status" value="1"/>
</dbReference>
<dbReference type="SUPFAM" id="SSF53335">
    <property type="entry name" value="S-adenosyl-L-methionine-dependent methyltransferases"/>
    <property type="match status" value="1"/>
</dbReference>
<dbReference type="PROSITE" id="PS51625">
    <property type="entry name" value="SAM_MT_TRMB"/>
    <property type="match status" value="1"/>
</dbReference>